<dbReference type="EC" id="1.1.1.261"/>
<dbReference type="EMBL" id="D88555">
    <property type="protein sequence ID" value="BAA13644.1"/>
    <property type="molecule type" value="Genomic_DNA"/>
</dbReference>
<dbReference type="EMBL" id="AE000666">
    <property type="protein sequence ID" value="AAB85116.1"/>
    <property type="molecule type" value="Genomic_DNA"/>
</dbReference>
<dbReference type="PIR" id="B69181">
    <property type="entry name" value="B69181"/>
</dbReference>
<dbReference type="RefSeq" id="WP_010876249.1">
    <property type="nucleotide sequence ID" value="NC_000916.1"/>
</dbReference>
<dbReference type="SMR" id="P72010"/>
<dbReference type="FunCoup" id="P72010">
    <property type="interactions" value="9"/>
</dbReference>
<dbReference type="STRING" id="187420.MTH_610"/>
<dbReference type="PaxDb" id="187420-MTH_610"/>
<dbReference type="EnsemblBacteria" id="AAB85116">
    <property type="protein sequence ID" value="AAB85116"/>
    <property type="gene ID" value="MTH_610"/>
</dbReference>
<dbReference type="GeneID" id="1470571"/>
<dbReference type="KEGG" id="mth:MTH_610"/>
<dbReference type="PATRIC" id="fig|187420.15.peg.591"/>
<dbReference type="HOGENOM" id="CLU_038362_0_0_2"/>
<dbReference type="InParanoid" id="P72010"/>
<dbReference type="BioCyc" id="MetaCyc:MONOMER-14507"/>
<dbReference type="SABIO-RK" id="P72010"/>
<dbReference type="UniPathway" id="UPA00940"/>
<dbReference type="Proteomes" id="UP000005223">
    <property type="component" value="Chromosome"/>
</dbReference>
<dbReference type="GO" id="GO:0005737">
    <property type="term" value="C:cytoplasm"/>
    <property type="evidence" value="ECO:0007669"/>
    <property type="project" value="UniProtKB-SubCell"/>
</dbReference>
<dbReference type="GO" id="GO:0106357">
    <property type="term" value="F:glycerol-1-phosphate dehydrogenase (NAD+) activity"/>
    <property type="evidence" value="ECO:0007669"/>
    <property type="project" value="RHEA"/>
</dbReference>
<dbReference type="GO" id="GO:0106358">
    <property type="term" value="F:glycerol-1-phosphate dehydrogenase (NADP+) activity"/>
    <property type="evidence" value="ECO:0007669"/>
    <property type="project" value="RHEA"/>
</dbReference>
<dbReference type="GO" id="GO:0046872">
    <property type="term" value="F:metal ion binding"/>
    <property type="evidence" value="ECO:0007669"/>
    <property type="project" value="UniProtKB-KW"/>
</dbReference>
<dbReference type="GO" id="GO:0006650">
    <property type="term" value="P:glycerophospholipid metabolic process"/>
    <property type="evidence" value="ECO:0007669"/>
    <property type="project" value="UniProtKB-UniRule"/>
</dbReference>
<dbReference type="GO" id="GO:0008654">
    <property type="term" value="P:phospholipid biosynthetic process"/>
    <property type="evidence" value="ECO:0007669"/>
    <property type="project" value="UniProtKB-KW"/>
</dbReference>
<dbReference type="CDD" id="cd08173">
    <property type="entry name" value="Gro1PDH"/>
    <property type="match status" value="1"/>
</dbReference>
<dbReference type="Gene3D" id="3.40.50.1970">
    <property type="match status" value="1"/>
</dbReference>
<dbReference type="Gene3D" id="1.20.1090.10">
    <property type="entry name" value="Dehydroquinate synthase-like - alpha domain"/>
    <property type="match status" value="1"/>
</dbReference>
<dbReference type="HAMAP" id="MF_00497_A">
    <property type="entry name" value="G1P_dehydrogenase_A"/>
    <property type="match status" value="1"/>
</dbReference>
<dbReference type="InterPro" id="IPR023002">
    <property type="entry name" value="G1P_dehydrogenase_arc"/>
</dbReference>
<dbReference type="InterPro" id="IPR032837">
    <property type="entry name" value="G1PDH"/>
</dbReference>
<dbReference type="InterPro" id="IPR016205">
    <property type="entry name" value="Glycerol_DH"/>
</dbReference>
<dbReference type="NCBIfam" id="NF002022">
    <property type="entry name" value="PRK00843.1"/>
    <property type="match status" value="1"/>
</dbReference>
<dbReference type="PANTHER" id="PTHR43616">
    <property type="entry name" value="GLYCEROL DEHYDROGENASE"/>
    <property type="match status" value="1"/>
</dbReference>
<dbReference type="PANTHER" id="PTHR43616:SF5">
    <property type="entry name" value="GLYCEROL DEHYDROGENASE 1"/>
    <property type="match status" value="1"/>
</dbReference>
<dbReference type="Pfam" id="PF13685">
    <property type="entry name" value="Fe-ADH_2"/>
    <property type="match status" value="1"/>
</dbReference>
<dbReference type="PIRSF" id="PIRSF000112">
    <property type="entry name" value="Glycerol_dehydrogenase"/>
    <property type="match status" value="1"/>
</dbReference>
<dbReference type="SUPFAM" id="SSF56796">
    <property type="entry name" value="Dehydroquinate synthase-like"/>
    <property type="match status" value="1"/>
</dbReference>
<keyword id="KW-0963">Cytoplasm</keyword>
<keyword id="KW-0903">Direct protein sequencing</keyword>
<keyword id="KW-0444">Lipid biosynthesis</keyword>
<keyword id="KW-0443">Lipid metabolism</keyword>
<keyword id="KW-0479">Metal-binding</keyword>
<keyword id="KW-0520">NAD</keyword>
<keyword id="KW-0521">NADP</keyword>
<keyword id="KW-0560">Oxidoreductase</keyword>
<keyword id="KW-0594">Phospholipid biosynthesis</keyword>
<keyword id="KW-1208">Phospholipid metabolism</keyword>
<keyword id="KW-1185">Reference proteome</keyword>
<keyword id="KW-0862">Zinc</keyword>
<sequence>MDPRKIQLPREIYTGPGVIEDTGRICRDLRFEGRAMVVTGPRTLQIAGEAAIESLQAEGFEVDQVTVDDATMASVRNVQDGLDGVSVVLGVGGGKVIDVAKMSATLEGLHFISVPTAASHDGIASPRASIRNGEGTASLEASSPIGVIADTEIISRAPFRLLASGCADIISNYTAIMDWKLAHRLLNERYSESAAALSLMTAKMIIKSADAIKEGLEESARLAVKSLISSGIAISIAGSSRPASGSEHKFSHALDMIAPKPALHGEQCGVGTIMMMHLHGGDWQFIRDALARINAPTTAAELGIDPEYIIEALTMAHNIRRERYTILGDRGLTREAAERLAKITEVI</sequence>
<comment type="function">
    <text evidence="3 4">Catalyzes the NAD(P)H-dependent reduction of dihydroxyacetonephosphate (DHAP or glycerone phosphate) to glycerol 1-phosphate (G1P). The G1P thus generated is used as the glycerophosphate backbone of phospholipids in the cellular membranes of Archaea. Is also able to catalyze the reverse reaction, i.e. the NAD(P)(+)-dependent oxidation of G1P but not of G3P. Is not active toward glycerol, dihydroxyacetone, glyceraldehyde-3-phosphate, glyceraldehyde and glycerol-2-phosphate.</text>
</comment>
<comment type="catalytic activity">
    <reaction evidence="4">
        <text>sn-glycerol 1-phosphate + NAD(+) = dihydroxyacetone phosphate + NADH + H(+)</text>
        <dbReference type="Rhea" id="RHEA:21412"/>
        <dbReference type="ChEBI" id="CHEBI:15378"/>
        <dbReference type="ChEBI" id="CHEBI:57540"/>
        <dbReference type="ChEBI" id="CHEBI:57642"/>
        <dbReference type="ChEBI" id="CHEBI:57685"/>
        <dbReference type="ChEBI" id="CHEBI:57945"/>
        <dbReference type="EC" id="1.1.1.261"/>
    </reaction>
</comment>
<comment type="catalytic activity">
    <reaction evidence="4">
        <text>sn-glycerol 1-phosphate + NADP(+) = dihydroxyacetone phosphate + NADPH + H(+)</text>
        <dbReference type="Rhea" id="RHEA:21416"/>
        <dbReference type="ChEBI" id="CHEBI:15378"/>
        <dbReference type="ChEBI" id="CHEBI:57642"/>
        <dbReference type="ChEBI" id="CHEBI:57685"/>
        <dbReference type="ChEBI" id="CHEBI:57783"/>
        <dbReference type="ChEBI" id="CHEBI:58349"/>
        <dbReference type="EC" id="1.1.1.261"/>
    </reaction>
</comment>
<comment type="cofactor">
    <cofactor evidence="2 3">
        <name>Zn(2+)</name>
        <dbReference type="ChEBI" id="CHEBI:29105"/>
    </cofactor>
    <text evidence="2 3">Binds 1 zinc ion per subunit.</text>
</comment>
<comment type="activity regulation">
    <text evidence="4">Partially inhibited by divalent metal cations such as Co(2+), Cu(2+) and Ni(2+).</text>
</comment>
<comment type="biophysicochemical properties">
    <kinetics>
        <KM evidence="4">2.17 mM for DHAP (in the presence of NADH as coenzyme)</KM>
        <KM evidence="4">0.58 mM for DHAP (in the presence of NADPH as coenzyme)</KM>
        <KM evidence="4">0.129 mM for NADH</KM>
        <KM evidence="4">0.025 mM for NADPH</KM>
        <KM evidence="4">16.3 mM for G1P (in the presence of NAD as coenzyme)</KM>
        <KM evidence="4">4.8 mM for G1P (in the presence of NADP as coenzyme)</KM>
        <KM evidence="4">0.127 mM for NAD(+)</KM>
        <KM evidence="4">0.27 mM for NADP(+)</KM>
        <Vmax evidence="4">610.0 umol/min/mg enzyme for DHAP reduction with NADH as coenzyme</Vmax>
        <Vmax evidence="4">303.0 umol/min/mg enzyme for DHAP reduction with NADPH as coenzyme</Vmax>
        <Vmax evidence="4">39.8 umol/min/mg enzyme for G1P oxidation with NADH as coenzyme</Vmax>
        <Vmax evidence="4">23.9 umol/min/mg enzyme for G1P oxidation with NADPH as coenzyme</Vmax>
    </kinetics>
    <phDependence>
        <text evidence="4">Optimum pH is 6.6-7-4. Activity decreases gradually at pH over 7.4 or below 6.6.</text>
    </phDependence>
    <temperatureDependence>
        <text evidence="4">Optimum temperature is 75 degrees Celsius.</text>
    </temperatureDependence>
</comment>
<comment type="pathway">
    <text>Membrane lipid metabolism; glycerophospholipid metabolism.</text>
</comment>
<comment type="subunit">
    <text evidence="4">Homooctamer.</text>
</comment>
<comment type="subcellular location">
    <subcellularLocation>
        <location evidence="5">Cytoplasm</location>
    </subcellularLocation>
</comment>
<comment type="miscellaneous">
    <text>G1PDH is a pro-R type dehydrogenase, which selectively transfers the pro-R hydrogen from NADH to dihydroxyacetonephosphate.</text>
</comment>
<comment type="similarity">
    <text evidence="5">Belongs to the glycerol-1-phosphate dehydrogenase family.</text>
</comment>
<reference key="1">
    <citation type="journal article" date="1998" name="J. Mol. Evol.">
        <title>Did archaeal and bacterial cells arise independently from noncellular precursors? A hypothesis stating that the advent of membrane phospholipid with enantiomeric glycerophosphate backbones caused the separation of the two lines of descent.</title>
        <authorList>
            <person name="Koga Y."/>
            <person name="Kyuragi T."/>
            <person name="Nishihara M."/>
            <person name="Sone N."/>
        </authorList>
    </citation>
    <scope>NUCLEOTIDE SEQUENCE [GENOMIC DNA]</scope>
    <source>
        <strain>ATCC 29096 / DSM 1053 / JCM 10044 / NBRC 100330 / Delta H</strain>
    </source>
</reference>
<reference key="2">
    <citation type="journal article" date="1998" name="J. Mol. Evol.">
        <authorList>
            <person name="Koga Y."/>
            <person name="Kyuragi T."/>
            <person name="Nishihara M."/>
            <person name="Sone N."/>
        </authorList>
    </citation>
    <scope>ERRATUM OF PUBMED:9419225</scope>
</reference>
<reference key="3">
    <citation type="journal article" date="1997" name="J. Bacteriol.">
        <title>Complete genome sequence of Methanobacterium thermoautotrophicum deltaH: functional analysis and comparative genomics.</title>
        <authorList>
            <person name="Smith D.R."/>
            <person name="Doucette-Stamm L.A."/>
            <person name="Deloughery C."/>
            <person name="Lee H.-M."/>
            <person name="Dubois J."/>
            <person name="Aldredge T."/>
            <person name="Bashirzadeh R."/>
            <person name="Blakely D."/>
            <person name="Cook R."/>
            <person name="Gilbert K."/>
            <person name="Harrison D."/>
            <person name="Hoang L."/>
            <person name="Keagle P."/>
            <person name="Lumm W."/>
            <person name="Pothier B."/>
            <person name="Qiu D."/>
            <person name="Spadafora R."/>
            <person name="Vicare R."/>
            <person name="Wang Y."/>
            <person name="Wierzbowski J."/>
            <person name="Gibson R."/>
            <person name="Jiwani N."/>
            <person name="Caruso A."/>
            <person name="Bush D."/>
            <person name="Safer H."/>
            <person name="Patwell D."/>
            <person name="Prabhakar S."/>
            <person name="McDougall S."/>
            <person name="Shimer G."/>
            <person name="Goyal A."/>
            <person name="Pietrovski S."/>
            <person name="Church G.M."/>
            <person name="Daniels C.J."/>
            <person name="Mao J.-I."/>
            <person name="Rice P."/>
            <person name="Noelling J."/>
            <person name="Reeve J.N."/>
        </authorList>
    </citation>
    <scope>NUCLEOTIDE SEQUENCE [LARGE SCALE GENOMIC DNA]</scope>
    <source>
        <strain>ATCC 29096 / DSM 1053 / JCM 10044 / NBRC 100330 / Delta H</strain>
    </source>
</reference>
<reference key="4">
    <citation type="journal article" date="1997" name="J. Biochem.">
        <title>Purification and properties of sn-glycerol-1-phosphate dehydrogenase from Methanobacterium thermoautotrophicum: characterization of the biosynthetic enzyme for the enantiomeric glycerophosphate backbone of ether polar lipids of Archaea.</title>
        <authorList>
            <person name="Nishihara M."/>
            <person name="Koga Y."/>
        </authorList>
    </citation>
    <scope>PROTEIN SEQUENCE OF 1-23</scope>
    <scope>FUNCTION</scope>
    <scope>CATALYTIC ACTIVITY</scope>
    <scope>SUBSTRATE SPECIFICITY</scope>
    <scope>ACTIVITY REGULATION</scope>
    <scope>SUBUNIT</scope>
    <scope>BIOPHYSICOCHEMICAL PROPERTIES</scope>
    <source>
        <strain>ATCC 29096 / DSM 1053 / JCM 10044 / NBRC 100330 / Delta H</strain>
    </source>
</reference>
<reference key="5">
    <citation type="journal article" date="1998" name="J. Biochem.">
        <authorList>
            <person name="Nishihara M."/>
            <person name="Koga Y."/>
        </authorList>
    </citation>
    <scope>ERRATUM OF PUBMED:9348086</scope>
</reference>
<reference key="6">
    <citation type="journal article" date="2002" name="Protein Eng.">
        <title>Analysis of membrane stereochemistry with homology modeling of sn-glycerol-1-phosphate dehydrogenase.</title>
        <authorList>
            <person name="Daiyasu H."/>
            <person name="Hiroike T."/>
            <person name="Koga Y."/>
            <person name="Toh H."/>
        </authorList>
    </citation>
    <scope>COFACTOR</scope>
    <scope>3D-STRUCTURE MODELING</scope>
</reference>
<reference key="7">
    <citation type="journal article" date="2003" name="Biosci. Biotechnol. Biochem.">
        <title>Transfer of pro-R hydrogen from NADH to dihydroxyacetonephosphate by sn-glycerol-1-phosphate dehydrogenase from the archaeon Methanothermobacter thermautotrophicus.</title>
        <authorList>
            <person name="Koga Y."/>
            <person name="Sone N."/>
            <person name="Noguchi S."/>
            <person name="Morii H."/>
        </authorList>
    </citation>
    <scope>FUNCTION</scope>
    <scope>COFACTOR</scope>
    <scope>STEREOSPECIFICITY</scope>
</reference>
<protein>
    <recommendedName>
        <fullName>Glycerol-1-phosphate dehydrogenase [NAD(P)+]</fullName>
        <shortName>G1P dehydrogenase</shortName>
        <shortName>G1PDH</shortName>
        <ecNumber>1.1.1.261</ecNumber>
    </recommendedName>
    <alternativeName>
        <fullName>Enantiomeric glycerophosphate synthase</fullName>
    </alternativeName>
    <alternativeName>
        <fullName>sn-glycerol-1-phosphate dehydrogenase</fullName>
    </alternativeName>
</protein>
<feature type="chain" id="PRO_0000157345" description="Glycerol-1-phosphate dehydrogenase [NAD(P)+]">
    <location>
        <begin position="1"/>
        <end position="347"/>
    </location>
</feature>
<feature type="binding site" evidence="1">
    <location>
        <begin position="94"/>
        <end position="98"/>
    </location>
    <ligand>
        <name>NAD(+)</name>
        <dbReference type="ChEBI" id="CHEBI:57540"/>
    </ligand>
</feature>
<feature type="binding site" evidence="1">
    <location>
        <begin position="116"/>
        <end position="119"/>
    </location>
    <ligand>
        <name>NAD(+)</name>
        <dbReference type="ChEBI" id="CHEBI:57540"/>
    </ligand>
</feature>
<feature type="binding site" evidence="5">
    <location>
        <position position="121"/>
    </location>
    <ligand>
        <name>substrate</name>
    </ligand>
</feature>
<feature type="binding site" evidence="1">
    <location>
        <position position="125"/>
    </location>
    <ligand>
        <name>NAD(+)</name>
        <dbReference type="ChEBI" id="CHEBI:57540"/>
    </ligand>
</feature>
<feature type="binding site" evidence="5">
    <location>
        <position position="168"/>
    </location>
    <ligand>
        <name>substrate</name>
    </ligand>
</feature>
<feature type="binding site" evidence="5">
    <location>
        <position position="168"/>
    </location>
    <ligand>
        <name>Zn(2+)</name>
        <dbReference type="ChEBI" id="CHEBI:29105"/>
        <note>catalytic</note>
    </ligand>
</feature>
<feature type="binding site" evidence="5">
    <location>
        <position position="248"/>
    </location>
    <ligand>
        <name>Zn(2+)</name>
        <dbReference type="ChEBI" id="CHEBI:29105"/>
        <note>catalytic</note>
    </ligand>
</feature>
<feature type="binding site" evidence="5">
    <location>
        <position position="252"/>
    </location>
    <ligand>
        <name>substrate</name>
    </ligand>
</feature>
<feature type="binding site" evidence="5">
    <location>
        <position position="264"/>
    </location>
    <ligand>
        <name>Zn(2+)</name>
        <dbReference type="ChEBI" id="CHEBI:29105"/>
        <note>catalytic</note>
    </ligand>
</feature>
<name>G1PDH_METTH</name>
<proteinExistence type="evidence at protein level"/>
<organism>
    <name type="scientific">Methanothermobacter thermautotrophicus (strain ATCC 29096 / DSM 1053 / JCM 10044 / NBRC 100330 / Delta H)</name>
    <name type="common">Methanobacterium thermoautotrophicum</name>
    <dbReference type="NCBI Taxonomy" id="187420"/>
    <lineage>
        <taxon>Archaea</taxon>
        <taxon>Methanobacteriati</taxon>
        <taxon>Methanobacteriota</taxon>
        <taxon>Methanomada group</taxon>
        <taxon>Methanobacteria</taxon>
        <taxon>Methanobacteriales</taxon>
        <taxon>Methanobacteriaceae</taxon>
        <taxon>Methanothermobacter</taxon>
    </lineage>
</organism>
<gene>
    <name type="primary">egsA</name>
    <name type="ordered locus">MTH_610</name>
</gene>
<accession>P72010</accession>
<evidence type="ECO:0000250" key="1"/>
<evidence type="ECO:0000269" key="2">
    <source>
    </source>
</evidence>
<evidence type="ECO:0000269" key="3">
    <source>
    </source>
</evidence>
<evidence type="ECO:0000269" key="4">
    <source>
    </source>
</evidence>
<evidence type="ECO:0000305" key="5"/>